<keyword id="KW-0326">Glycosidase</keyword>
<keyword id="KW-0378">Hydrolase</keyword>
<dbReference type="EC" id="3.2.-.-" evidence="1"/>
<dbReference type="EMBL" id="CU928158">
    <property type="protein sequence ID" value="CAQ89949.1"/>
    <property type="molecule type" value="Genomic_DNA"/>
</dbReference>
<dbReference type="RefSeq" id="WP_001207494.1">
    <property type="nucleotide sequence ID" value="NC_011740.1"/>
</dbReference>
<dbReference type="SMR" id="B7LKV4"/>
<dbReference type="GeneID" id="75056511"/>
<dbReference type="KEGG" id="efe:EFER_2452"/>
<dbReference type="HOGENOM" id="CLU_036838_2_0_6"/>
<dbReference type="OrthoDB" id="9797882at2"/>
<dbReference type="Proteomes" id="UP000000745">
    <property type="component" value="Chromosome"/>
</dbReference>
<dbReference type="GO" id="GO:0005829">
    <property type="term" value="C:cytosol"/>
    <property type="evidence" value="ECO:0007669"/>
    <property type="project" value="TreeGrafter"/>
</dbReference>
<dbReference type="GO" id="GO:0008477">
    <property type="term" value="F:purine nucleosidase activity"/>
    <property type="evidence" value="ECO:0007669"/>
    <property type="project" value="TreeGrafter"/>
</dbReference>
<dbReference type="GO" id="GO:0045437">
    <property type="term" value="F:uridine nucleosidase activity"/>
    <property type="evidence" value="ECO:0007669"/>
    <property type="project" value="InterPro"/>
</dbReference>
<dbReference type="GO" id="GO:0015949">
    <property type="term" value="P:nucleobase-containing small molecule interconversion"/>
    <property type="evidence" value="ECO:0007669"/>
    <property type="project" value="InterPro"/>
</dbReference>
<dbReference type="GO" id="GO:0006152">
    <property type="term" value="P:purine nucleoside catabolic process"/>
    <property type="evidence" value="ECO:0007669"/>
    <property type="project" value="TreeGrafter"/>
</dbReference>
<dbReference type="GO" id="GO:0006206">
    <property type="term" value="P:pyrimidine nucleobase metabolic process"/>
    <property type="evidence" value="ECO:0007669"/>
    <property type="project" value="UniProtKB-UniRule"/>
</dbReference>
<dbReference type="CDD" id="cd02651">
    <property type="entry name" value="nuc_hydro_IU_UC_XIUA"/>
    <property type="match status" value="1"/>
</dbReference>
<dbReference type="FunFam" id="3.90.245.10:FF:000001">
    <property type="entry name" value="Pyrimidine-specific ribonucleoside hydrolase RihA"/>
    <property type="match status" value="1"/>
</dbReference>
<dbReference type="Gene3D" id="3.90.245.10">
    <property type="entry name" value="Ribonucleoside hydrolase-like"/>
    <property type="match status" value="1"/>
</dbReference>
<dbReference type="HAMAP" id="MF_01431">
    <property type="entry name" value="Pyrim_hydro_RihA"/>
    <property type="match status" value="1"/>
</dbReference>
<dbReference type="InterPro" id="IPR015910">
    <property type="entry name" value="I/U_nuclsd_hydro_CS"/>
</dbReference>
<dbReference type="InterPro" id="IPR001910">
    <property type="entry name" value="Inosine/uridine_hydrolase_dom"/>
</dbReference>
<dbReference type="InterPro" id="IPR023186">
    <property type="entry name" value="IUNH"/>
</dbReference>
<dbReference type="InterPro" id="IPR022975">
    <property type="entry name" value="Pyrim_hydro_RihA"/>
</dbReference>
<dbReference type="InterPro" id="IPR036452">
    <property type="entry name" value="Ribo_hydro-like"/>
</dbReference>
<dbReference type="NCBIfam" id="NF007761">
    <property type="entry name" value="PRK10443.1"/>
    <property type="match status" value="1"/>
</dbReference>
<dbReference type="PANTHER" id="PTHR12304">
    <property type="entry name" value="INOSINE-URIDINE PREFERRING NUCLEOSIDE HYDROLASE"/>
    <property type="match status" value="1"/>
</dbReference>
<dbReference type="PANTHER" id="PTHR12304:SF4">
    <property type="entry name" value="URIDINE NUCLEOSIDASE"/>
    <property type="match status" value="1"/>
</dbReference>
<dbReference type="Pfam" id="PF01156">
    <property type="entry name" value="IU_nuc_hydro"/>
    <property type="match status" value="1"/>
</dbReference>
<dbReference type="SUPFAM" id="SSF53590">
    <property type="entry name" value="Nucleoside hydrolase"/>
    <property type="match status" value="1"/>
</dbReference>
<dbReference type="PROSITE" id="PS01247">
    <property type="entry name" value="IUNH"/>
    <property type="match status" value="1"/>
</dbReference>
<gene>
    <name evidence="1" type="primary">rihA</name>
    <name type="ordered locus">EFER_2452</name>
</gene>
<organism>
    <name type="scientific">Escherichia fergusonii (strain ATCC 35469 / DSM 13698 / CCUG 18766 / IAM 14443 / JCM 21226 / LMG 7866 / NBRC 102419 / NCTC 12128 / CDC 0568-73)</name>
    <dbReference type="NCBI Taxonomy" id="585054"/>
    <lineage>
        <taxon>Bacteria</taxon>
        <taxon>Pseudomonadati</taxon>
        <taxon>Pseudomonadota</taxon>
        <taxon>Gammaproteobacteria</taxon>
        <taxon>Enterobacterales</taxon>
        <taxon>Enterobacteriaceae</taxon>
        <taxon>Escherichia</taxon>
    </lineage>
</organism>
<name>RIHA_ESCF3</name>
<proteinExistence type="inferred from homology"/>
<accession>B7LKV4</accession>
<comment type="function">
    <text evidence="1">Hydrolyzes with equal efficiency cytidine or uridine to ribose and cytosine or uracil, respectively.</text>
</comment>
<comment type="similarity">
    <text evidence="1">Belongs to the IUNH family. RihA subfamily.</text>
</comment>
<reference key="1">
    <citation type="journal article" date="2009" name="PLoS Genet.">
        <title>Organised genome dynamics in the Escherichia coli species results in highly diverse adaptive paths.</title>
        <authorList>
            <person name="Touchon M."/>
            <person name="Hoede C."/>
            <person name="Tenaillon O."/>
            <person name="Barbe V."/>
            <person name="Baeriswyl S."/>
            <person name="Bidet P."/>
            <person name="Bingen E."/>
            <person name="Bonacorsi S."/>
            <person name="Bouchier C."/>
            <person name="Bouvet O."/>
            <person name="Calteau A."/>
            <person name="Chiapello H."/>
            <person name="Clermont O."/>
            <person name="Cruveiller S."/>
            <person name="Danchin A."/>
            <person name="Diard M."/>
            <person name="Dossat C."/>
            <person name="Karoui M.E."/>
            <person name="Frapy E."/>
            <person name="Garry L."/>
            <person name="Ghigo J.M."/>
            <person name="Gilles A.M."/>
            <person name="Johnson J."/>
            <person name="Le Bouguenec C."/>
            <person name="Lescat M."/>
            <person name="Mangenot S."/>
            <person name="Martinez-Jehanne V."/>
            <person name="Matic I."/>
            <person name="Nassif X."/>
            <person name="Oztas S."/>
            <person name="Petit M.A."/>
            <person name="Pichon C."/>
            <person name="Rouy Z."/>
            <person name="Ruf C.S."/>
            <person name="Schneider D."/>
            <person name="Tourret J."/>
            <person name="Vacherie B."/>
            <person name="Vallenet D."/>
            <person name="Medigue C."/>
            <person name="Rocha E.P.C."/>
            <person name="Denamur E."/>
        </authorList>
    </citation>
    <scope>NUCLEOTIDE SEQUENCE [LARGE SCALE GENOMIC DNA]</scope>
    <source>
        <strain>ATCC 35469 / DSM 13698 / BCRC 15582 / CCUG 18766 / IAM 14443 / JCM 21226 / LMG 7866 / NBRC 102419 / NCTC 12128 / CDC 0568-73</strain>
    </source>
</reference>
<sequence>MALPILLDCDPGHDDAIAIVLALASPELDVKAITSSAGNQTPEKTLRNVLRMLTLLNRTDIPVAGGAVKPLMRDLIIADNVHGESGLDGPALPEPTFAPQNCTAVELMAKTLRESAEPVTIVSTGPQTNVALLLNSHPELHSKIARIVIMGGAMGIGNWTPAAEFNIYVDPEAAEIVFQSGIPVVMAGLDVTHKAQIHVEDTERFRAIGNPVSTIVAELLDFFLEYHKDEKWGFVGAPLHDPCTIAWLLKPELFTTVERWVGVETQGKYTQGMTVVDYYYLTGNKPNATVMVDVDRQGFVDLLAERLKFYA</sequence>
<feature type="chain" id="PRO_1000145796" description="Pyrimidine-specific ribonucleoside hydrolase RihA">
    <location>
        <begin position="1"/>
        <end position="311"/>
    </location>
</feature>
<feature type="active site" evidence="1">
    <location>
        <position position="240"/>
    </location>
</feature>
<protein>
    <recommendedName>
        <fullName evidence="1">Pyrimidine-specific ribonucleoside hydrolase RihA</fullName>
        <ecNumber evidence="1">3.2.-.-</ecNumber>
    </recommendedName>
    <alternativeName>
        <fullName evidence="1">Cytidine/uridine-specific hydrolase</fullName>
    </alternativeName>
</protein>
<evidence type="ECO:0000255" key="1">
    <source>
        <dbReference type="HAMAP-Rule" id="MF_01431"/>
    </source>
</evidence>